<name>JUNB_CYPCA</name>
<sequence>MSTKMEQPFYHDDSFLVGYGHNDAALHDYKLQKQSMNLNLTEPYRNLKSDLYHTSGADSGSLKLASPELERLIIQTSNGVLTTPTPGQYLYSRGITDEQEGFAEGFVKALDDLHKMFQMPPPNVSIGAGGVTTCSTTASVFGSSLQSEPPIYTLNAYCPAPSHPSTTISYLPPHVQQSQHPENTHGFQHSGVLPQRYVPLKEEPQTVPDMHSSDCSPPTSPIDMENQERIKAERKRLRNRLAATKCRKRKLERISRLEEKVKVLKNDNAGLSNTASVLRDQVAQLKQKVLRHMNSGCQLMLTSKMEAF</sequence>
<dbReference type="EMBL" id="U81506">
    <property type="protein sequence ID" value="AAB39939.1"/>
    <property type="molecule type" value="mRNA"/>
</dbReference>
<dbReference type="SMR" id="P79703"/>
<dbReference type="Proteomes" id="UP000694384">
    <property type="component" value="Unplaced"/>
</dbReference>
<dbReference type="Proteomes" id="UP000694427">
    <property type="component" value="Unplaced"/>
</dbReference>
<dbReference type="Proteomes" id="UP000694700">
    <property type="component" value="Unplaced"/>
</dbReference>
<dbReference type="Proteomes" id="UP000694701">
    <property type="component" value="Unplaced"/>
</dbReference>
<dbReference type="Proteomes" id="UP001155660">
    <property type="component" value="Unplaced"/>
</dbReference>
<dbReference type="GO" id="GO:0005634">
    <property type="term" value="C:nucleus"/>
    <property type="evidence" value="ECO:0007669"/>
    <property type="project" value="UniProtKB-SubCell"/>
</dbReference>
<dbReference type="GO" id="GO:0005667">
    <property type="term" value="C:transcription regulator complex"/>
    <property type="evidence" value="ECO:0007669"/>
    <property type="project" value="TreeGrafter"/>
</dbReference>
<dbReference type="GO" id="GO:0000981">
    <property type="term" value="F:DNA-binding transcription factor activity, RNA polymerase II-specific"/>
    <property type="evidence" value="ECO:0007669"/>
    <property type="project" value="TreeGrafter"/>
</dbReference>
<dbReference type="GO" id="GO:0000978">
    <property type="term" value="F:RNA polymerase II cis-regulatory region sequence-specific DNA binding"/>
    <property type="evidence" value="ECO:0007669"/>
    <property type="project" value="TreeGrafter"/>
</dbReference>
<dbReference type="GO" id="GO:0051726">
    <property type="term" value="P:regulation of cell cycle"/>
    <property type="evidence" value="ECO:0007669"/>
    <property type="project" value="TreeGrafter"/>
</dbReference>
<dbReference type="GO" id="GO:0042127">
    <property type="term" value="P:regulation of cell population proliferation"/>
    <property type="evidence" value="ECO:0007669"/>
    <property type="project" value="TreeGrafter"/>
</dbReference>
<dbReference type="CDD" id="cd14696">
    <property type="entry name" value="bZIP_Jun"/>
    <property type="match status" value="1"/>
</dbReference>
<dbReference type="FunFam" id="1.20.5.170:FF:000012">
    <property type="entry name" value="Putative transcription factor AP-1"/>
    <property type="match status" value="1"/>
</dbReference>
<dbReference type="Gene3D" id="1.20.5.170">
    <property type="match status" value="1"/>
</dbReference>
<dbReference type="InterPro" id="IPR050946">
    <property type="entry name" value="AP-1_TF_bZIP"/>
</dbReference>
<dbReference type="InterPro" id="IPR004827">
    <property type="entry name" value="bZIP"/>
</dbReference>
<dbReference type="InterPro" id="IPR046347">
    <property type="entry name" value="bZIP_sf"/>
</dbReference>
<dbReference type="InterPro" id="IPR005643">
    <property type="entry name" value="JNK"/>
</dbReference>
<dbReference type="InterPro" id="IPR002112">
    <property type="entry name" value="Leuzip_Jun"/>
</dbReference>
<dbReference type="InterPro" id="IPR008917">
    <property type="entry name" value="TF_DNA-bd_sf"/>
</dbReference>
<dbReference type="PANTHER" id="PTHR11462">
    <property type="entry name" value="JUN TRANSCRIPTION FACTOR-RELATED"/>
    <property type="match status" value="1"/>
</dbReference>
<dbReference type="PANTHER" id="PTHR11462:SF37">
    <property type="entry name" value="TRANSCRIPTION FACTOR JUNB"/>
    <property type="match status" value="1"/>
</dbReference>
<dbReference type="Pfam" id="PF00170">
    <property type="entry name" value="bZIP_1"/>
    <property type="match status" value="1"/>
</dbReference>
<dbReference type="Pfam" id="PF03957">
    <property type="entry name" value="Jun"/>
    <property type="match status" value="1"/>
</dbReference>
<dbReference type="PRINTS" id="PR00043">
    <property type="entry name" value="LEUZIPPRJUN"/>
</dbReference>
<dbReference type="SMART" id="SM00338">
    <property type="entry name" value="BRLZ"/>
    <property type="match status" value="1"/>
</dbReference>
<dbReference type="SUPFAM" id="SSF47454">
    <property type="entry name" value="A DNA-binding domain in eukaryotic transcription factors"/>
    <property type="match status" value="1"/>
</dbReference>
<dbReference type="SUPFAM" id="SSF57959">
    <property type="entry name" value="Leucine zipper domain"/>
    <property type="match status" value="1"/>
</dbReference>
<dbReference type="PROSITE" id="PS50217">
    <property type="entry name" value="BZIP"/>
    <property type="match status" value="1"/>
</dbReference>
<dbReference type="PROSITE" id="PS00036">
    <property type="entry name" value="BZIP_BASIC"/>
    <property type="match status" value="1"/>
</dbReference>
<organism>
    <name type="scientific">Cyprinus carpio</name>
    <name type="common">Common carp</name>
    <dbReference type="NCBI Taxonomy" id="7962"/>
    <lineage>
        <taxon>Eukaryota</taxon>
        <taxon>Metazoa</taxon>
        <taxon>Chordata</taxon>
        <taxon>Craniata</taxon>
        <taxon>Vertebrata</taxon>
        <taxon>Euteleostomi</taxon>
        <taxon>Actinopterygii</taxon>
        <taxon>Neopterygii</taxon>
        <taxon>Teleostei</taxon>
        <taxon>Ostariophysi</taxon>
        <taxon>Cypriniformes</taxon>
        <taxon>Cyprinidae</taxon>
        <taxon>Cyprininae</taxon>
        <taxon>Cyprinus</taxon>
    </lineage>
</organism>
<evidence type="ECO:0000250" key="1"/>
<evidence type="ECO:0000255" key="2">
    <source>
        <dbReference type="PROSITE-ProRule" id="PRU00978"/>
    </source>
</evidence>
<evidence type="ECO:0000305" key="3"/>
<gene>
    <name type="primary">junb</name>
</gene>
<proteinExistence type="evidence at transcript level"/>
<reference key="1">
    <citation type="submission" date="1997-02" db="EMBL/GenBank/DDBJ databases">
        <authorList>
            <person name="Chang M.S."/>
            <person name="Huang C.J."/>
        </authorList>
    </citation>
    <scope>NUCLEOTIDE SEQUENCE [MRNA]</scope>
</reference>
<protein>
    <recommendedName>
        <fullName evidence="3">Transcription factor JunB</fullName>
    </recommendedName>
    <alternativeName>
        <fullName evidence="3">Transcription factor AP-1 subunit JunB</fullName>
    </alternativeName>
</protein>
<accession>P79703</accession>
<feature type="chain" id="PRO_0000076441" description="Transcription factor JunB">
    <location>
        <begin position="1"/>
        <end position="308"/>
    </location>
</feature>
<feature type="domain" description="bZIP" evidence="2">
    <location>
        <begin position="229"/>
        <end position="292"/>
    </location>
</feature>
<feature type="region of interest" description="Basic motif" evidence="2">
    <location>
        <begin position="229"/>
        <end position="256"/>
    </location>
</feature>
<feature type="region of interest" description="Leucine-zipper" evidence="2">
    <location>
        <begin position="257"/>
        <end position="285"/>
    </location>
</feature>
<comment type="function">
    <text evidence="1">Transcription factor involved in regulating gene activity following the primary growth factor response. Binds to the DNA sequence 5'-TGA[CG]TCA-3' (By similarity).</text>
</comment>
<comment type="subunit">
    <text>Binds DNA as a homodimer or as a heterodimer with another member of the jun/fos family.</text>
</comment>
<comment type="subcellular location">
    <subcellularLocation>
        <location>Nucleus</location>
    </subcellularLocation>
</comment>
<comment type="similarity">
    <text evidence="3">Belongs to the bZIP family. Jun subfamily.</text>
</comment>
<keyword id="KW-0238">DNA-binding</keyword>
<keyword id="KW-0539">Nucleus</keyword>
<keyword id="KW-1185">Reference proteome</keyword>
<keyword id="KW-0804">Transcription</keyword>
<keyword id="KW-0805">Transcription regulation</keyword>